<reference key="1">
    <citation type="journal article" date="2003" name="Proc. Natl. Acad. Sci. U.S.A.">
        <title>Complete genome sequence of Lactobacillus plantarum WCFS1.</title>
        <authorList>
            <person name="Kleerebezem M."/>
            <person name="Boekhorst J."/>
            <person name="van Kranenburg R."/>
            <person name="Molenaar D."/>
            <person name="Kuipers O.P."/>
            <person name="Leer R."/>
            <person name="Tarchini R."/>
            <person name="Peters S.A."/>
            <person name="Sandbrink H.M."/>
            <person name="Fiers M.W.E.J."/>
            <person name="Stiekema W."/>
            <person name="Klein Lankhorst R.M."/>
            <person name="Bron P.A."/>
            <person name="Hoffer S.M."/>
            <person name="Nierop Groot M.N."/>
            <person name="Kerkhoven R."/>
            <person name="De Vries M."/>
            <person name="Ursing B."/>
            <person name="De Vos W.M."/>
            <person name="Siezen R.J."/>
        </authorList>
    </citation>
    <scope>NUCLEOTIDE SEQUENCE [LARGE SCALE GENOMIC DNA]</scope>
    <source>
        <strain>ATCC BAA-793 / NCIMB 8826 / WCFS1</strain>
    </source>
</reference>
<reference key="2">
    <citation type="journal article" date="2012" name="J. Bacteriol.">
        <title>Complete resequencing and reannotation of the Lactobacillus plantarum WCFS1 genome.</title>
        <authorList>
            <person name="Siezen R.J."/>
            <person name="Francke C."/>
            <person name="Renckens B."/>
            <person name="Boekhorst J."/>
            <person name="Wels M."/>
            <person name="Kleerebezem M."/>
            <person name="van Hijum S.A."/>
        </authorList>
    </citation>
    <scope>NUCLEOTIDE SEQUENCE [LARGE SCALE GENOMIC DNA]</scope>
    <scope>GENOME REANNOTATION</scope>
    <source>
        <strain>ATCC BAA-793 / NCIMB 8826 / WCFS1</strain>
    </source>
</reference>
<proteinExistence type="inferred from homology"/>
<name>CH10_LACPL</name>
<comment type="function">
    <text evidence="1">Together with the chaperonin GroEL, plays an essential role in assisting protein folding. The GroEL-GroES system forms a nano-cage that allows encapsulation of the non-native substrate proteins and provides a physical environment optimized to promote and accelerate protein folding. GroES binds to the apical surface of the GroEL ring, thereby capping the opening of the GroEL channel.</text>
</comment>
<comment type="subunit">
    <text evidence="1">Heptamer of 7 subunits arranged in a ring. Interacts with the chaperonin GroEL.</text>
</comment>
<comment type="subcellular location">
    <subcellularLocation>
        <location evidence="1">Cytoplasm</location>
    </subcellularLocation>
</comment>
<comment type="similarity">
    <text evidence="1">Belongs to the GroES chaperonin family.</text>
</comment>
<sequence length="94" mass="10293">MLKPLGDRVILQQQEEEEQTIGGIVIANNAKEKPQSGKVVAVNDGRVLDNGTKVDPSVKVGDQVLFDKYAGTEVKYQGAKYLVLHEKDIVAIED</sequence>
<dbReference type="EMBL" id="AL935263">
    <property type="protein sequence ID" value="CCC78197.1"/>
    <property type="molecule type" value="Genomic_DNA"/>
</dbReference>
<dbReference type="RefSeq" id="WP_003640985.1">
    <property type="nucleotide sequence ID" value="NC_004567.2"/>
</dbReference>
<dbReference type="RefSeq" id="YP_004888711.1">
    <property type="nucleotide sequence ID" value="NC_004567.2"/>
</dbReference>
<dbReference type="SMR" id="Q88YM6"/>
<dbReference type="STRING" id="220668.lp_0727"/>
<dbReference type="EnsemblBacteria" id="CCC78197">
    <property type="protein sequence ID" value="CCC78197"/>
    <property type="gene ID" value="lp_0727"/>
</dbReference>
<dbReference type="GeneID" id="89668298"/>
<dbReference type="KEGG" id="lpl:lp_0727"/>
<dbReference type="PATRIC" id="fig|220668.9.peg.612"/>
<dbReference type="eggNOG" id="COG0234">
    <property type="taxonomic scope" value="Bacteria"/>
</dbReference>
<dbReference type="HOGENOM" id="CLU_132825_2_1_9"/>
<dbReference type="OrthoDB" id="9806791at2"/>
<dbReference type="PhylomeDB" id="Q88YM6"/>
<dbReference type="Proteomes" id="UP000000432">
    <property type="component" value="Chromosome"/>
</dbReference>
<dbReference type="GO" id="GO:0005737">
    <property type="term" value="C:cytoplasm"/>
    <property type="evidence" value="ECO:0007669"/>
    <property type="project" value="UniProtKB-SubCell"/>
</dbReference>
<dbReference type="GO" id="GO:0005524">
    <property type="term" value="F:ATP binding"/>
    <property type="evidence" value="ECO:0007669"/>
    <property type="project" value="InterPro"/>
</dbReference>
<dbReference type="GO" id="GO:0046872">
    <property type="term" value="F:metal ion binding"/>
    <property type="evidence" value="ECO:0007669"/>
    <property type="project" value="TreeGrafter"/>
</dbReference>
<dbReference type="GO" id="GO:0044183">
    <property type="term" value="F:protein folding chaperone"/>
    <property type="evidence" value="ECO:0007669"/>
    <property type="project" value="InterPro"/>
</dbReference>
<dbReference type="GO" id="GO:0051087">
    <property type="term" value="F:protein-folding chaperone binding"/>
    <property type="evidence" value="ECO:0007669"/>
    <property type="project" value="TreeGrafter"/>
</dbReference>
<dbReference type="GO" id="GO:0051082">
    <property type="term" value="F:unfolded protein binding"/>
    <property type="evidence" value="ECO:0007669"/>
    <property type="project" value="TreeGrafter"/>
</dbReference>
<dbReference type="GO" id="GO:0051085">
    <property type="term" value="P:chaperone cofactor-dependent protein refolding"/>
    <property type="evidence" value="ECO:0007669"/>
    <property type="project" value="TreeGrafter"/>
</dbReference>
<dbReference type="CDD" id="cd00320">
    <property type="entry name" value="cpn10"/>
    <property type="match status" value="1"/>
</dbReference>
<dbReference type="FunFam" id="2.30.33.40:FF:000001">
    <property type="entry name" value="10 kDa chaperonin"/>
    <property type="match status" value="1"/>
</dbReference>
<dbReference type="Gene3D" id="2.30.33.40">
    <property type="entry name" value="GroES chaperonin"/>
    <property type="match status" value="1"/>
</dbReference>
<dbReference type="HAMAP" id="MF_00580">
    <property type="entry name" value="CH10"/>
    <property type="match status" value="1"/>
</dbReference>
<dbReference type="InterPro" id="IPR020818">
    <property type="entry name" value="Chaperonin_GroES"/>
</dbReference>
<dbReference type="InterPro" id="IPR037124">
    <property type="entry name" value="Chaperonin_GroES_sf"/>
</dbReference>
<dbReference type="InterPro" id="IPR018369">
    <property type="entry name" value="Chaprnonin_Cpn10_CS"/>
</dbReference>
<dbReference type="InterPro" id="IPR011032">
    <property type="entry name" value="GroES-like_sf"/>
</dbReference>
<dbReference type="NCBIfam" id="NF001531">
    <property type="entry name" value="PRK00364.2-2"/>
    <property type="match status" value="1"/>
</dbReference>
<dbReference type="NCBIfam" id="NF001533">
    <property type="entry name" value="PRK00364.2-4"/>
    <property type="match status" value="1"/>
</dbReference>
<dbReference type="NCBIfam" id="NF001534">
    <property type="entry name" value="PRK00364.2-5"/>
    <property type="match status" value="1"/>
</dbReference>
<dbReference type="PANTHER" id="PTHR10772">
    <property type="entry name" value="10 KDA HEAT SHOCK PROTEIN"/>
    <property type="match status" value="1"/>
</dbReference>
<dbReference type="PANTHER" id="PTHR10772:SF58">
    <property type="entry name" value="CO-CHAPERONIN GROES"/>
    <property type="match status" value="1"/>
</dbReference>
<dbReference type="Pfam" id="PF00166">
    <property type="entry name" value="Cpn10"/>
    <property type="match status" value="1"/>
</dbReference>
<dbReference type="PRINTS" id="PR00297">
    <property type="entry name" value="CHAPERONIN10"/>
</dbReference>
<dbReference type="SMART" id="SM00883">
    <property type="entry name" value="Cpn10"/>
    <property type="match status" value="1"/>
</dbReference>
<dbReference type="SUPFAM" id="SSF50129">
    <property type="entry name" value="GroES-like"/>
    <property type="match status" value="1"/>
</dbReference>
<dbReference type="PROSITE" id="PS00681">
    <property type="entry name" value="CHAPERONINS_CPN10"/>
    <property type="match status" value="1"/>
</dbReference>
<feature type="chain" id="PRO_0000174772" description="Co-chaperonin GroES">
    <location>
        <begin position="1"/>
        <end position="94"/>
    </location>
</feature>
<protein>
    <recommendedName>
        <fullName evidence="1">Co-chaperonin GroES</fullName>
    </recommendedName>
    <alternativeName>
        <fullName evidence="1">10 kDa chaperonin</fullName>
    </alternativeName>
    <alternativeName>
        <fullName evidence="1">Chaperonin-10</fullName>
        <shortName evidence="1">Cpn10</shortName>
    </alternativeName>
</protein>
<keyword id="KW-0143">Chaperone</keyword>
<keyword id="KW-0963">Cytoplasm</keyword>
<keyword id="KW-1185">Reference proteome</keyword>
<evidence type="ECO:0000255" key="1">
    <source>
        <dbReference type="HAMAP-Rule" id="MF_00580"/>
    </source>
</evidence>
<gene>
    <name evidence="1" type="primary">groES</name>
    <name evidence="1" type="synonym">groS</name>
    <name type="ordered locus">lp_0727</name>
</gene>
<accession>Q88YM6</accession>
<accession>F9ULV8</accession>
<organism>
    <name type="scientific">Lactiplantibacillus plantarum (strain ATCC BAA-793 / NCIMB 8826 / WCFS1)</name>
    <name type="common">Lactobacillus plantarum</name>
    <dbReference type="NCBI Taxonomy" id="220668"/>
    <lineage>
        <taxon>Bacteria</taxon>
        <taxon>Bacillati</taxon>
        <taxon>Bacillota</taxon>
        <taxon>Bacilli</taxon>
        <taxon>Lactobacillales</taxon>
        <taxon>Lactobacillaceae</taxon>
        <taxon>Lactiplantibacillus</taxon>
    </lineage>
</organism>